<comment type="function">
    <text evidence="1">Catalyzes the attachment of tyrosine to tRNA(Tyr) in a two-step reaction: tyrosine is first activated by ATP to form Tyr-AMP and then transferred to the acceptor end of tRNA(Tyr).</text>
</comment>
<comment type="catalytic activity">
    <reaction evidence="1">
        <text>tRNA(Tyr) + L-tyrosine + ATP = L-tyrosyl-tRNA(Tyr) + AMP + diphosphate + H(+)</text>
        <dbReference type="Rhea" id="RHEA:10220"/>
        <dbReference type="Rhea" id="RHEA-COMP:9706"/>
        <dbReference type="Rhea" id="RHEA-COMP:9707"/>
        <dbReference type="ChEBI" id="CHEBI:15378"/>
        <dbReference type="ChEBI" id="CHEBI:30616"/>
        <dbReference type="ChEBI" id="CHEBI:33019"/>
        <dbReference type="ChEBI" id="CHEBI:58315"/>
        <dbReference type="ChEBI" id="CHEBI:78442"/>
        <dbReference type="ChEBI" id="CHEBI:78536"/>
        <dbReference type="ChEBI" id="CHEBI:456215"/>
        <dbReference type="EC" id="6.1.1.1"/>
    </reaction>
</comment>
<comment type="subunit">
    <text evidence="1">Homodimer.</text>
</comment>
<comment type="subcellular location">
    <subcellularLocation>
        <location evidence="1">Cytoplasm</location>
    </subcellularLocation>
</comment>
<comment type="similarity">
    <text evidence="1">Belongs to the class-I aminoacyl-tRNA synthetase family. TyrS type 2 subfamily.</text>
</comment>
<organism>
    <name type="scientific">Bordetella avium (strain 197N)</name>
    <dbReference type="NCBI Taxonomy" id="360910"/>
    <lineage>
        <taxon>Bacteria</taxon>
        <taxon>Pseudomonadati</taxon>
        <taxon>Pseudomonadota</taxon>
        <taxon>Betaproteobacteria</taxon>
        <taxon>Burkholderiales</taxon>
        <taxon>Alcaligenaceae</taxon>
        <taxon>Bordetella</taxon>
    </lineage>
</organism>
<proteinExistence type="inferred from homology"/>
<evidence type="ECO:0000255" key="1">
    <source>
        <dbReference type="HAMAP-Rule" id="MF_02007"/>
    </source>
</evidence>
<name>SYY_BORA1</name>
<gene>
    <name evidence="1" type="primary">tyrS</name>
    <name type="ordered locus">BAV2963</name>
</gene>
<reference key="1">
    <citation type="journal article" date="2006" name="J. Bacteriol.">
        <title>Comparison of the genome sequence of the poultry pathogen Bordetella avium with those of B. bronchiseptica, B. pertussis, and B. parapertussis reveals extensive diversity in surface structures associated with host interaction.</title>
        <authorList>
            <person name="Sebaihia M."/>
            <person name="Preston A."/>
            <person name="Maskell D.J."/>
            <person name="Kuzmiak H."/>
            <person name="Connell T.D."/>
            <person name="King N.D."/>
            <person name="Orndorff P.E."/>
            <person name="Miyamoto D.M."/>
            <person name="Thomson N.R."/>
            <person name="Harris D."/>
            <person name="Goble A."/>
            <person name="Lord A."/>
            <person name="Murphy L."/>
            <person name="Quail M.A."/>
            <person name="Rutter S."/>
            <person name="Squares R."/>
            <person name="Squares S."/>
            <person name="Woodward J."/>
            <person name="Parkhill J."/>
            <person name="Temple L.M."/>
        </authorList>
    </citation>
    <scope>NUCLEOTIDE SEQUENCE [LARGE SCALE GENOMIC DNA]</scope>
    <source>
        <strain>197N</strain>
    </source>
</reference>
<dbReference type="EC" id="6.1.1.1" evidence="1"/>
<dbReference type="EMBL" id="AM167904">
    <property type="protein sequence ID" value="CAJ50573.1"/>
    <property type="molecule type" value="Genomic_DNA"/>
</dbReference>
<dbReference type="RefSeq" id="WP_012418602.1">
    <property type="nucleotide sequence ID" value="NC_010645.1"/>
</dbReference>
<dbReference type="SMR" id="Q2KV13"/>
<dbReference type="STRING" id="360910.BAV2963"/>
<dbReference type="GeneID" id="92933779"/>
<dbReference type="KEGG" id="bav:BAV2963"/>
<dbReference type="eggNOG" id="COG0162">
    <property type="taxonomic scope" value="Bacteria"/>
</dbReference>
<dbReference type="HOGENOM" id="CLU_024003_5_0_4"/>
<dbReference type="OrthoDB" id="9804243at2"/>
<dbReference type="Proteomes" id="UP000001977">
    <property type="component" value="Chromosome"/>
</dbReference>
<dbReference type="GO" id="GO:0005829">
    <property type="term" value="C:cytosol"/>
    <property type="evidence" value="ECO:0007669"/>
    <property type="project" value="TreeGrafter"/>
</dbReference>
<dbReference type="GO" id="GO:0005524">
    <property type="term" value="F:ATP binding"/>
    <property type="evidence" value="ECO:0007669"/>
    <property type="project" value="UniProtKB-UniRule"/>
</dbReference>
<dbReference type="GO" id="GO:0003723">
    <property type="term" value="F:RNA binding"/>
    <property type="evidence" value="ECO:0007669"/>
    <property type="project" value="UniProtKB-KW"/>
</dbReference>
<dbReference type="GO" id="GO:0004831">
    <property type="term" value="F:tyrosine-tRNA ligase activity"/>
    <property type="evidence" value="ECO:0007669"/>
    <property type="project" value="UniProtKB-UniRule"/>
</dbReference>
<dbReference type="GO" id="GO:0006437">
    <property type="term" value="P:tyrosyl-tRNA aminoacylation"/>
    <property type="evidence" value="ECO:0007669"/>
    <property type="project" value="UniProtKB-UniRule"/>
</dbReference>
<dbReference type="CDD" id="cd00165">
    <property type="entry name" value="S4"/>
    <property type="match status" value="1"/>
</dbReference>
<dbReference type="CDD" id="cd00805">
    <property type="entry name" value="TyrRS_core"/>
    <property type="match status" value="1"/>
</dbReference>
<dbReference type="FunFam" id="1.10.240.10:FF:000006">
    <property type="entry name" value="Tyrosine--tRNA ligase"/>
    <property type="match status" value="1"/>
</dbReference>
<dbReference type="FunFam" id="3.40.50.620:FF:000061">
    <property type="entry name" value="Tyrosine--tRNA ligase"/>
    <property type="match status" value="1"/>
</dbReference>
<dbReference type="Gene3D" id="3.40.50.620">
    <property type="entry name" value="HUPs"/>
    <property type="match status" value="1"/>
</dbReference>
<dbReference type="Gene3D" id="3.10.290.10">
    <property type="entry name" value="RNA-binding S4 domain"/>
    <property type="match status" value="1"/>
</dbReference>
<dbReference type="Gene3D" id="1.10.240.10">
    <property type="entry name" value="Tyrosyl-Transfer RNA Synthetase"/>
    <property type="match status" value="1"/>
</dbReference>
<dbReference type="HAMAP" id="MF_02007">
    <property type="entry name" value="Tyr_tRNA_synth_type2"/>
    <property type="match status" value="1"/>
</dbReference>
<dbReference type="InterPro" id="IPR001412">
    <property type="entry name" value="aa-tRNA-synth_I_CS"/>
</dbReference>
<dbReference type="InterPro" id="IPR002305">
    <property type="entry name" value="aa-tRNA-synth_Ic"/>
</dbReference>
<dbReference type="InterPro" id="IPR014729">
    <property type="entry name" value="Rossmann-like_a/b/a_fold"/>
</dbReference>
<dbReference type="InterPro" id="IPR002942">
    <property type="entry name" value="S4_RNA-bd"/>
</dbReference>
<dbReference type="InterPro" id="IPR036986">
    <property type="entry name" value="S4_RNA-bd_sf"/>
</dbReference>
<dbReference type="InterPro" id="IPR054608">
    <property type="entry name" value="SYY-like_C"/>
</dbReference>
<dbReference type="InterPro" id="IPR002307">
    <property type="entry name" value="Tyr-tRNA-ligase"/>
</dbReference>
<dbReference type="InterPro" id="IPR024088">
    <property type="entry name" value="Tyr-tRNA-ligase_bac-type"/>
</dbReference>
<dbReference type="InterPro" id="IPR024108">
    <property type="entry name" value="Tyr-tRNA-ligase_bac_2"/>
</dbReference>
<dbReference type="NCBIfam" id="TIGR00234">
    <property type="entry name" value="tyrS"/>
    <property type="match status" value="1"/>
</dbReference>
<dbReference type="PANTHER" id="PTHR11766:SF1">
    <property type="entry name" value="TYROSINE--TRNA LIGASE"/>
    <property type="match status" value="1"/>
</dbReference>
<dbReference type="PANTHER" id="PTHR11766">
    <property type="entry name" value="TYROSYL-TRNA SYNTHETASE"/>
    <property type="match status" value="1"/>
</dbReference>
<dbReference type="Pfam" id="PF22421">
    <property type="entry name" value="SYY_C-terminal"/>
    <property type="match status" value="1"/>
</dbReference>
<dbReference type="Pfam" id="PF00579">
    <property type="entry name" value="tRNA-synt_1b"/>
    <property type="match status" value="1"/>
</dbReference>
<dbReference type="PRINTS" id="PR01040">
    <property type="entry name" value="TRNASYNTHTYR"/>
</dbReference>
<dbReference type="SMART" id="SM00363">
    <property type="entry name" value="S4"/>
    <property type="match status" value="1"/>
</dbReference>
<dbReference type="SUPFAM" id="SSF55174">
    <property type="entry name" value="Alpha-L RNA-binding motif"/>
    <property type="match status" value="1"/>
</dbReference>
<dbReference type="SUPFAM" id="SSF52374">
    <property type="entry name" value="Nucleotidylyl transferase"/>
    <property type="match status" value="1"/>
</dbReference>
<dbReference type="PROSITE" id="PS00178">
    <property type="entry name" value="AA_TRNA_LIGASE_I"/>
    <property type="match status" value="1"/>
</dbReference>
<dbReference type="PROSITE" id="PS50889">
    <property type="entry name" value="S4"/>
    <property type="match status" value="1"/>
</dbReference>
<sequence>MSQAEFPITPEVEADLRIARRGCDELLVESEFARKLARSRATGVPLRIKLGLDPTAPDIHLGHTVVLNKMRQLQDLGHTVIFLIGDFTSTIGDPSGRNSTRPPLTREQIEHNAKTYYAQASLVLDPARTEIRYNSEWCDPLGARGMIQLASRYTVARMMEREDFTRRFKTGVPIAVHEFLYPLMQGYDSVALKADLELGGTDQKFNLLVGRELQKEYGQEPQCILTMPLLVGTDGVDKMSKSKGNYIGISESPDSMFGKLMSISDTLMWRYFELLSFRSLEDIAALKAEIDAGRNPRDAKVALAQEIITRFHSAKDAEQALANFEARFRDGAIPDDIPEVNLAGAPMGILHVLRASSLCASSSEAQRAIEQGGVKIDGAKIEDRSLQLNAGSYVLQVGKRKFARVNLAV</sequence>
<feature type="chain" id="PRO_0000236696" description="Tyrosine--tRNA ligase">
    <location>
        <begin position="1"/>
        <end position="409"/>
    </location>
</feature>
<feature type="domain" description="S4 RNA-binding" evidence="1">
    <location>
        <begin position="347"/>
        <end position="407"/>
    </location>
</feature>
<feature type="short sequence motif" description="'HIGH' region">
    <location>
        <begin position="54"/>
        <end position="63"/>
    </location>
</feature>
<feature type="short sequence motif" description="'KMSKS' region">
    <location>
        <begin position="238"/>
        <end position="242"/>
    </location>
</feature>
<feature type="binding site" evidence="1">
    <location>
        <position position="241"/>
    </location>
    <ligand>
        <name>ATP</name>
        <dbReference type="ChEBI" id="CHEBI:30616"/>
    </ligand>
</feature>
<protein>
    <recommendedName>
        <fullName evidence="1">Tyrosine--tRNA ligase</fullName>
        <ecNumber evidence="1">6.1.1.1</ecNumber>
    </recommendedName>
    <alternativeName>
        <fullName evidence="1">Tyrosyl-tRNA synthetase</fullName>
        <shortName evidence="1">TyrRS</shortName>
    </alternativeName>
</protein>
<keyword id="KW-0030">Aminoacyl-tRNA synthetase</keyword>
<keyword id="KW-0067">ATP-binding</keyword>
<keyword id="KW-0963">Cytoplasm</keyword>
<keyword id="KW-0436">Ligase</keyword>
<keyword id="KW-0547">Nucleotide-binding</keyword>
<keyword id="KW-0648">Protein biosynthesis</keyword>
<keyword id="KW-1185">Reference proteome</keyword>
<keyword id="KW-0694">RNA-binding</keyword>
<accession>Q2KV13</accession>